<comment type="function">
    <text evidence="1">Catalyzes an anti cycloisomerization.</text>
</comment>
<comment type="catalytic activity">
    <reaction>
        <text>2-(carboxymethyl)-5-oxo-2,5-dihydro-2-furoate = 3-carboxy-cis,cis-muconate + H(+)</text>
        <dbReference type="Rhea" id="RHEA:23656"/>
        <dbReference type="ChEBI" id="CHEBI:15378"/>
        <dbReference type="ChEBI" id="CHEBI:57496"/>
        <dbReference type="ChEBI" id="CHEBI:57979"/>
        <dbReference type="EC" id="5.5.1.2"/>
    </reaction>
</comment>
<comment type="pathway">
    <text>Aromatic compound metabolism; beta-ketoadipate pathway; 5-oxo-4,5-dihydro-2-furylacetate from 3-carboxy-cis,cis-muconate: step 1/2.</text>
</comment>
<comment type="subunit">
    <text evidence="1">Homotetramer.</text>
</comment>
<comment type="subcellular location">
    <subcellularLocation>
        <location evidence="1">Cytoplasm</location>
    </subcellularLocation>
</comment>
<comment type="similarity">
    <text evidence="2">Belongs to the class-II fumarase/aspartase family.</text>
</comment>
<protein>
    <recommendedName>
        <fullName>3-carboxy-cis,cis-muconate cycloisomerase</fullName>
        <ecNumber>5.5.1.2</ecNumber>
    </recommendedName>
    <alternativeName>
        <fullName>3-carboxymuconate lactonizing enzyme</fullName>
        <shortName>CMLE</shortName>
    </alternativeName>
</protein>
<organism>
    <name type="scientific">Pseudomonas aeruginosa (strain ATCC 15692 / DSM 22644 / CIP 104116 / JCM 14847 / LMG 12228 / 1C / PRS 101 / PAO1)</name>
    <dbReference type="NCBI Taxonomy" id="208964"/>
    <lineage>
        <taxon>Bacteria</taxon>
        <taxon>Pseudomonadati</taxon>
        <taxon>Pseudomonadota</taxon>
        <taxon>Gammaproteobacteria</taxon>
        <taxon>Pseudomonadales</taxon>
        <taxon>Pseudomonadaceae</taxon>
        <taxon>Pseudomonas</taxon>
    </lineage>
</organism>
<sequence length="459" mass="49121">MSDVPANQLFDAYFMAAPMRAVFSDRGRLQGMLDFEAALARAEARTGVVPATAVAPIEAACRAELYDPLALAEAVATAGNSAIPLVKALGRQVAAGDAEAERYVHLGATSQDAMDSGLVLQLRRALALLEQDLQRLAEVLADQAERHADTPLAGRTWLQHATPVTLGMKLAGLLGALTRHRQRLRELRPRLLVLQFGGASGTLAALGEQALPVAAALAEELGLALPEQPWHTQRDRLVEFASVLGLVAGSLGKFGRDVSLLMQTEAGEVFEPAGAGRGGSSTMPHKRNPVSSAVLIAAATRAPGLVSTLFAAMPQEHERSLGLWHAEWETLPELCCLVAGALQQAIGLLEGLEVDAQRMRRNLGLTHGLVLAEAVSIALARRIGREAAHHLVEQCCRRAVEQRRELRAVLGEEARVSAELSGDELDRLLDPAHYLGQARAWVERALAEHHALGFEPHPA</sequence>
<evidence type="ECO:0000250" key="1"/>
<evidence type="ECO:0000305" key="2"/>
<keyword id="KW-0058">Aromatic hydrocarbons catabolism</keyword>
<keyword id="KW-0963">Cytoplasm</keyword>
<keyword id="KW-0413">Isomerase</keyword>
<keyword id="KW-1185">Reference proteome</keyword>
<dbReference type="EC" id="5.5.1.2"/>
<dbReference type="EMBL" id="AE004091">
    <property type="protein sequence ID" value="AAG03619.1"/>
    <property type="molecule type" value="Genomic_DNA"/>
</dbReference>
<dbReference type="PIR" id="B83616">
    <property type="entry name" value="B83616"/>
</dbReference>
<dbReference type="RefSeq" id="NP_248921.1">
    <property type="nucleotide sequence ID" value="NC_002516.2"/>
</dbReference>
<dbReference type="RefSeq" id="WP_003112675.1">
    <property type="nucleotide sequence ID" value="NZ_QZGE01000024.1"/>
</dbReference>
<dbReference type="SMR" id="Q9I6Q8"/>
<dbReference type="STRING" id="208964.PA0230"/>
<dbReference type="PaxDb" id="208964-PA0230"/>
<dbReference type="GeneID" id="881957"/>
<dbReference type="KEGG" id="pae:PA0230"/>
<dbReference type="PATRIC" id="fig|208964.12.peg.240"/>
<dbReference type="PseudoCAP" id="PA0230"/>
<dbReference type="HOGENOM" id="CLU_030949_3_3_6"/>
<dbReference type="InParanoid" id="Q9I6Q8"/>
<dbReference type="OrthoDB" id="9768878at2"/>
<dbReference type="PhylomeDB" id="Q9I6Q8"/>
<dbReference type="BioCyc" id="PAER208964:G1FZ6-232-MONOMER"/>
<dbReference type="UniPathway" id="UPA00157">
    <property type="reaction ID" value="UER00265"/>
</dbReference>
<dbReference type="Proteomes" id="UP000002438">
    <property type="component" value="Chromosome"/>
</dbReference>
<dbReference type="GO" id="GO:0005737">
    <property type="term" value="C:cytoplasm"/>
    <property type="evidence" value="ECO:0007669"/>
    <property type="project" value="UniProtKB-SubCell"/>
</dbReference>
<dbReference type="GO" id="GO:0047472">
    <property type="term" value="F:3-carboxy-cis,cis-muconate cycloisomerase activity"/>
    <property type="evidence" value="ECO:0007669"/>
    <property type="project" value="UniProtKB-EC"/>
</dbReference>
<dbReference type="GO" id="GO:0016829">
    <property type="term" value="F:lyase activity"/>
    <property type="evidence" value="ECO:0007669"/>
    <property type="project" value="UniProtKB-ARBA"/>
</dbReference>
<dbReference type="GO" id="GO:0019619">
    <property type="term" value="P:3,4-dihydroxybenzoate catabolic process"/>
    <property type="evidence" value="ECO:0007669"/>
    <property type="project" value="InterPro"/>
</dbReference>
<dbReference type="GO" id="GO:0042952">
    <property type="term" value="P:beta-ketoadipate pathway"/>
    <property type="evidence" value="ECO:0007669"/>
    <property type="project" value="UniProtKB-UniPathway"/>
</dbReference>
<dbReference type="CDD" id="cd01597">
    <property type="entry name" value="pCLME"/>
    <property type="match status" value="1"/>
</dbReference>
<dbReference type="FunFam" id="1.20.200.10:FF:000014">
    <property type="entry name" value="3-carboxy-cis,cis-muconate cycloisomerase"/>
    <property type="match status" value="1"/>
</dbReference>
<dbReference type="FunFam" id="1.10.40.30:FF:000007">
    <property type="entry name" value="Adenylosuccinate lyase"/>
    <property type="match status" value="1"/>
</dbReference>
<dbReference type="Gene3D" id="1.10.40.30">
    <property type="entry name" value="Fumarase/aspartase (C-terminal domain)"/>
    <property type="match status" value="1"/>
</dbReference>
<dbReference type="Gene3D" id="1.20.200.10">
    <property type="entry name" value="Fumarase/aspartase (Central domain)"/>
    <property type="match status" value="1"/>
</dbReference>
<dbReference type="InterPro" id="IPR019468">
    <property type="entry name" value="AdenyloSucc_lyase_C"/>
</dbReference>
<dbReference type="InterPro" id="IPR020557">
    <property type="entry name" value="Fumarate_lyase_CS"/>
</dbReference>
<dbReference type="InterPro" id="IPR000362">
    <property type="entry name" value="Fumarate_lyase_fam"/>
</dbReference>
<dbReference type="InterPro" id="IPR022761">
    <property type="entry name" value="Fumarate_lyase_N"/>
</dbReference>
<dbReference type="InterPro" id="IPR008948">
    <property type="entry name" value="L-Aspartase-like"/>
</dbReference>
<dbReference type="InterPro" id="IPR012789">
    <property type="entry name" value="Protocat_PcaB-like"/>
</dbReference>
<dbReference type="NCBIfam" id="NF006554">
    <property type="entry name" value="PRK09053.1"/>
    <property type="match status" value="1"/>
</dbReference>
<dbReference type="NCBIfam" id="TIGR02426">
    <property type="entry name" value="protocat_pcaB"/>
    <property type="match status" value="1"/>
</dbReference>
<dbReference type="PANTHER" id="PTHR43172">
    <property type="entry name" value="ADENYLOSUCCINATE LYASE"/>
    <property type="match status" value="1"/>
</dbReference>
<dbReference type="PANTHER" id="PTHR43172:SF2">
    <property type="entry name" value="ADENYLOSUCCINATE LYASE C-TERMINAL DOMAIN-CONTAINING PROTEIN"/>
    <property type="match status" value="1"/>
</dbReference>
<dbReference type="Pfam" id="PF10397">
    <property type="entry name" value="ADSL_C"/>
    <property type="match status" value="1"/>
</dbReference>
<dbReference type="Pfam" id="PF00206">
    <property type="entry name" value="Lyase_1"/>
    <property type="match status" value="1"/>
</dbReference>
<dbReference type="PRINTS" id="PR00145">
    <property type="entry name" value="ARGSUCLYASE"/>
</dbReference>
<dbReference type="PRINTS" id="PR00149">
    <property type="entry name" value="FUMRATELYASE"/>
</dbReference>
<dbReference type="SMART" id="SM00998">
    <property type="entry name" value="ADSL_C"/>
    <property type="match status" value="1"/>
</dbReference>
<dbReference type="SUPFAM" id="SSF48557">
    <property type="entry name" value="L-aspartase-like"/>
    <property type="match status" value="1"/>
</dbReference>
<dbReference type="PROSITE" id="PS00163">
    <property type="entry name" value="FUMARATE_LYASES"/>
    <property type="match status" value="1"/>
</dbReference>
<reference key="1">
    <citation type="journal article" date="2000" name="Nature">
        <title>Complete genome sequence of Pseudomonas aeruginosa PAO1, an opportunistic pathogen.</title>
        <authorList>
            <person name="Stover C.K."/>
            <person name="Pham X.-Q.T."/>
            <person name="Erwin A.L."/>
            <person name="Mizoguchi S.D."/>
            <person name="Warrener P."/>
            <person name="Hickey M.J."/>
            <person name="Brinkman F.S.L."/>
            <person name="Hufnagle W.O."/>
            <person name="Kowalik D.J."/>
            <person name="Lagrou M."/>
            <person name="Garber R.L."/>
            <person name="Goltry L."/>
            <person name="Tolentino E."/>
            <person name="Westbrock-Wadman S."/>
            <person name="Yuan Y."/>
            <person name="Brody L.L."/>
            <person name="Coulter S.N."/>
            <person name="Folger K.R."/>
            <person name="Kas A."/>
            <person name="Larbig K."/>
            <person name="Lim R.M."/>
            <person name="Smith K.A."/>
            <person name="Spencer D.H."/>
            <person name="Wong G.K.-S."/>
            <person name="Wu Z."/>
            <person name="Paulsen I.T."/>
            <person name="Reizer J."/>
            <person name="Saier M.H. Jr."/>
            <person name="Hancock R.E.W."/>
            <person name="Lory S."/>
            <person name="Olson M.V."/>
        </authorList>
    </citation>
    <scope>NUCLEOTIDE SEQUENCE [LARGE SCALE GENOMIC DNA]</scope>
    <source>
        <strain>ATCC 15692 / DSM 22644 / CIP 104116 / JCM 14847 / LMG 12228 / 1C / PRS 101 / PAO1</strain>
    </source>
</reference>
<proteinExistence type="inferred from homology"/>
<name>PCAB_PSEAE</name>
<accession>Q9I6Q8</accession>
<gene>
    <name type="primary">pcaB</name>
    <name type="ordered locus">PA0230</name>
</gene>
<feature type="chain" id="PRO_0000287772" description="3-carboxy-cis,cis-muconate cycloisomerase">
    <location>
        <begin position="1"/>
        <end position="459"/>
    </location>
</feature>